<feature type="chain" id="PRO_0000419332" description="Brefeldin A-inhibited guanine nucleotide-exchange protein 2">
    <location>
        <begin position="1"/>
        <end position="1792"/>
    </location>
</feature>
<feature type="domain" description="SEC7" evidence="4">
    <location>
        <begin position="661"/>
        <end position="792"/>
    </location>
</feature>
<feature type="region of interest" description="DCB; DCB:DCB domain and DCB:HUS domain interaction" evidence="1">
    <location>
        <begin position="2"/>
        <end position="224"/>
    </location>
</feature>
<feature type="region of interest" description="Disordered" evidence="5">
    <location>
        <begin position="207"/>
        <end position="294"/>
    </location>
</feature>
<feature type="region of interest" description="HUS; DCB:HUS domain interaction" evidence="1">
    <location>
        <begin position="515"/>
        <end position="535"/>
    </location>
</feature>
<feature type="compositionally biased region" description="Polar residues" evidence="5">
    <location>
        <begin position="214"/>
        <end position="225"/>
    </location>
</feature>
<feature type="compositionally biased region" description="Polar residues" evidence="5">
    <location>
        <begin position="233"/>
        <end position="243"/>
    </location>
</feature>
<feature type="modified residue" description="N-acetylmethionine" evidence="3">
    <location>
        <position position="1"/>
    </location>
</feature>
<feature type="modified residue" description="Phosphoserine" evidence="3">
    <location>
        <position position="214"/>
    </location>
</feature>
<feature type="modified residue" description="Phosphoserine" evidence="6 7">
    <location>
        <position position="218"/>
    </location>
</feature>
<feature type="modified residue" description="Phosphoserine" evidence="6 7">
    <location>
        <position position="227"/>
    </location>
</feature>
<feature type="modified residue" description="Phosphothreonine" evidence="3">
    <location>
        <position position="244"/>
    </location>
</feature>
<feature type="modified residue" description="Phosphoserine" evidence="2">
    <location>
        <position position="355"/>
    </location>
</feature>
<feature type="modified residue" description="Phosphoserine" evidence="3">
    <location>
        <position position="356"/>
    </location>
</feature>
<feature type="modified residue" description="Phosphoserine" evidence="6 7">
    <location>
        <position position="621"/>
    </location>
</feature>
<feature type="modified residue" description="Phosphothreonine" evidence="6 7">
    <location>
        <position position="623"/>
    </location>
</feature>
<feature type="modified residue" description="Phosphoserine" evidence="7">
    <location>
        <position position="624"/>
    </location>
</feature>
<feature type="modified residue" description="Phosphothreonine" evidence="7">
    <location>
        <position position="633"/>
    </location>
</feature>
<feature type="modified residue" description="Phosphoserine" evidence="3">
    <location>
        <position position="707"/>
    </location>
</feature>
<feature type="modified residue" description="Phosphoserine" evidence="3">
    <location>
        <position position="1518"/>
    </location>
</feature>
<feature type="modified residue" description="Phosphoserine" evidence="2">
    <location>
        <position position="1520"/>
    </location>
</feature>
<feature type="modified residue" description="Phosphoserine" evidence="2">
    <location>
        <position position="1521"/>
    </location>
</feature>
<feature type="modified residue" description="Phosphoserine" evidence="3">
    <location>
        <position position="1532"/>
    </location>
</feature>
<feature type="modified residue" description="Phosphoserine" evidence="7">
    <location>
        <position position="1535"/>
    </location>
</feature>
<feature type="modified residue" description="Phosphoserine" evidence="2">
    <location>
        <position position="1541"/>
    </location>
</feature>
<feature type="modified residue" description="Phosphoserine" evidence="3">
    <location>
        <position position="1789"/>
    </location>
</feature>
<dbReference type="EMBL" id="AL591703">
    <property type="status" value="NOT_ANNOTATED_CDS"/>
    <property type="molecule type" value="Genomic_DNA"/>
</dbReference>
<dbReference type="EMBL" id="AL591911">
    <property type="status" value="NOT_ANNOTATED_CDS"/>
    <property type="molecule type" value="Genomic_DNA"/>
</dbReference>
<dbReference type="EMBL" id="CH466551">
    <property type="protein sequence ID" value="EDL06489.1"/>
    <property type="molecule type" value="Genomic_DNA"/>
</dbReference>
<dbReference type="EMBL" id="BC158012">
    <property type="protein sequence ID" value="AAI58013.1"/>
    <property type="molecule type" value="mRNA"/>
</dbReference>
<dbReference type="CCDS" id="CCDS38335.1"/>
<dbReference type="RefSeq" id="NP_001078964.1">
    <property type="nucleotide sequence ID" value="NM_001085495.2"/>
</dbReference>
<dbReference type="SMR" id="A2A5R2"/>
<dbReference type="BioGRID" id="221234">
    <property type="interactions" value="7"/>
</dbReference>
<dbReference type="FunCoup" id="A2A5R2">
    <property type="interactions" value="4311"/>
</dbReference>
<dbReference type="IntAct" id="A2A5R2">
    <property type="interactions" value="2"/>
</dbReference>
<dbReference type="STRING" id="10090.ENSMUSP00000096677"/>
<dbReference type="GlyGen" id="A2A5R2">
    <property type="glycosylation" value="1 site, 1 O-linked glycan (1 site)"/>
</dbReference>
<dbReference type="iPTMnet" id="A2A5R2"/>
<dbReference type="PhosphoSitePlus" id="A2A5R2"/>
<dbReference type="SwissPalm" id="A2A5R2"/>
<dbReference type="jPOST" id="A2A5R2"/>
<dbReference type="PaxDb" id="10090-ENSMUSP00000096677"/>
<dbReference type="PeptideAtlas" id="A2A5R2"/>
<dbReference type="ProteomicsDB" id="273489"/>
<dbReference type="Pumba" id="A2A5R2"/>
<dbReference type="Antibodypedia" id="13512">
    <property type="antibodies" value="147 antibodies from 24 providers"/>
</dbReference>
<dbReference type="Ensembl" id="ENSMUST00000099078.10">
    <property type="protein sequence ID" value="ENSMUSP00000096677.4"/>
    <property type="gene ID" value="ENSMUSG00000074582.11"/>
</dbReference>
<dbReference type="GeneID" id="99371"/>
<dbReference type="KEGG" id="mmu:99371"/>
<dbReference type="UCSC" id="uc008nyr.2">
    <property type="organism name" value="mouse"/>
</dbReference>
<dbReference type="AGR" id="MGI:2139354"/>
<dbReference type="CTD" id="10564"/>
<dbReference type="MGI" id="MGI:2139354">
    <property type="gene designation" value="Arfgef2"/>
</dbReference>
<dbReference type="VEuPathDB" id="HostDB:ENSMUSG00000074582"/>
<dbReference type="eggNOG" id="KOG0929">
    <property type="taxonomic scope" value="Eukaryota"/>
</dbReference>
<dbReference type="GeneTree" id="ENSGT00940000158950"/>
<dbReference type="HOGENOM" id="CLU_000691_1_1_1"/>
<dbReference type="InParanoid" id="A2A5R2"/>
<dbReference type="OMA" id="FWKSNEM"/>
<dbReference type="OrthoDB" id="18431at2759"/>
<dbReference type="PhylomeDB" id="A2A5R2"/>
<dbReference type="TreeFam" id="TF300714"/>
<dbReference type="BioGRID-ORCS" id="99371">
    <property type="hits" value="2 hits in 78 CRISPR screens"/>
</dbReference>
<dbReference type="ChiTaRS" id="Arfgef2">
    <property type="organism name" value="mouse"/>
</dbReference>
<dbReference type="PRO" id="PR:A2A5R2"/>
<dbReference type="Proteomes" id="UP000000589">
    <property type="component" value="Chromosome 2"/>
</dbReference>
<dbReference type="RNAct" id="A2A5R2">
    <property type="molecule type" value="protein"/>
</dbReference>
<dbReference type="Bgee" id="ENSMUSG00000074582">
    <property type="expression patterns" value="Expressed in pigmented layer of retina and 226 other cell types or tissues"/>
</dbReference>
<dbReference type="ExpressionAtlas" id="A2A5R2">
    <property type="expression patterns" value="baseline and differential"/>
</dbReference>
<dbReference type="GO" id="GO:0032279">
    <property type="term" value="C:asymmetric synapse"/>
    <property type="evidence" value="ECO:0000250"/>
    <property type="project" value="UniProtKB"/>
</dbReference>
<dbReference type="GO" id="GO:0005879">
    <property type="term" value="C:axonemal microtubule"/>
    <property type="evidence" value="ECO:0000250"/>
    <property type="project" value="UniProtKB"/>
</dbReference>
<dbReference type="GO" id="GO:0005813">
    <property type="term" value="C:centrosome"/>
    <property type="evidence" value="ECO:0007669"/>
    <property type="project" value="UniProtKB-SubCell"/>
</dbReference>
<dbReference type="GO" id="GO:0031410">
    <property type="term" value="C:cytoplasmic vesicle"/>
    <property type="evidence" value="ECO:0000250"/>
    <property type="project" value="UniProtKB"/>
</dbReference>
<dbReference type="GO" id="GO:0005829">
    <property type="term" value="C:cytosol"/>
    <property type="evidence" value="ECO:0000266"/>
    <property type="project" value="MGI"/>
</dbReference>
<dbReference type="GO" id="GO:0043197">
    <property type="term" value="C:dendritic spine"/>
    <property type="evidence" value="ECO:0000250"/>
    <property type="project" value="UniProtKB"/>
</dbReference>
<dbReference type="GO" id="GO:0098982">
    <property type="term" value="C:GABA-ergic synapse"/>
    <property type="evidence" value="ECO:0007669"/>
    <property type="project" value="Ensembl"/>
</dbReference>
<dbReference type="GO" id="GO:0098978">
    <property type="term" value="C:glutamatergic synapse"/>
    <property type="evidence" value="ECO:0007669"/>
    <property type="project" value="Ensembl"/>
</dbReference>
<dbReference type="GO" id="GO:0000139">
    <property type="term" value="C:Golgi membrane"/>
    <property type="evidence" value="ECO:0000250"/>
    <property type="project" value="UniProtKB"/>
</dbReference>
<dbReference type="GO" id="GO:0016020">
    <property type="term" value="C:membrane"/>
    <property type="evidence" value="ECO:0000266"/>
    <property type="project" value="MGI"/>
</dbReference>
<dbReference type="GO" id="GO:0005815">
    <property type="term" value="C:microtubule organizing center"/>
    <property type="evidence" value="ECO:0000250"/>
    <property type="project" value="UniProtKB"/>
</dbReference>
<dbReference type="GO" id="GO:0048471">
    <property type="term" value="C:perinuclear region of cytoplasm"/>
    <property type="evidence" value="ECO:0007669"/>
    <property type="project" value="UniProtKB-SubCell"/>
</dbReference>
<dbReference type="GO" id="GO:0098793">
    <property type="term" value="C:presynapse"/>
    <property type="evidence" value="ECO:0007669"/>
    <property type="project" value="Ensembl"/>
</dbReference>
<dbReference type="GO" id="GO:0055037">
    <property type="term" value="C:recycling endosome"/>
    <property type="evidence" value="ECO:0000250"/>
    <property type="project" value="UniProtKB"/>
</dbReference>
<dbReference type="GO" id="GO:0032280">
    <property type="term" value="C:symmetric synapse"/>
    <property type="evidence" value="ECO:0000250"/>
    <property type="project" value="UniProtKB"/>
</dbReference>
<dbReference type="GO" id="GO:0005802">
    <property type="term" value="C:trans-Golgi network"/>
    <property type="evidence" value="ECO:0000250"/>
    <property type="project" value="UniProtKB"/>
</dbReference>
<dbReference type="GO" id="GO:0050811">
    <property type="term" value="F:GABA receptor binding"/>
    <property type="evidence" value="ECO:0000250"/>
    <property type="project" value="UniProtKB"/>
</dbReference>
<dbReference type="GO" id="GO:0005085">
    <property type="term" value="F:guanyl-nucleotide exchange factor activity"/>
    <property type="evidence" value="ECO:0000250"/>
    <property type="project" value="UniProtKB"/>
</dbReference>
<dbReference type="GO" id="GO:0017022">
    <property type="term" value="F:myosin binding"/>
    <property type="evidence" value="ECO:0007669"/>
    <property type="project" value="Ensembl"/>
</dbReference>
<dbReference type="GO" id="GO:0034237">
    <property type="term" value="F:protein kinase A regulatory subunit binding"/>
    <property type="evidence" value="ECO:0000250"/>
    <property type="project" value="UniProtKB"/>
</dbReference>
<dbReference type="GO" id="GO:0010256">
    <property type="term" value="P:endomembrane system organization"/>
    <property type="evidence" value="ECO:0000250"/>
    <property type="project" value="UniProtKB"/>
</dbReference>
<dbReference type="GO" id="GO:0007032">
    <property type="term" value="P:endosome organization"/>
    <property type="evidence" value="ECO:0000250"/>
    <property type="project" value="UniProtKB"/>
</dbReference>
<dbReference type="GO" id="GO:0006887">
    <property type="term" value="P:exocytosis"/>
    <property type="evidence" value="ECO:0007669"/>
    <property type="project" value="Ensembl"/>
</dbReference>
<dbReference type="GO" id="GO:0006893">
    <property type="term" value="P:Golgi to plasma membrane transport"/>
    <property type="evidence" value="ECO:0000250"/>
    <property type="project" value="UniProtKB"/>
</dbReference>
<dbReference type="GO" id="GO:0035556">
    <property type="term" value="P:intracellular signal transduction"/>
    <property type="evidence" value="ECO:0000266"/>
    <property type="project" value="MGI"/>
</dbReference>
<dbReference type="GO" id="GO:0032760">
    <property type="term" value="P:positive regulation of tumor necrosis factor production"/>
    <property type="evidence" value="ECO:0000250"/>
    <property type="project" value="UniProtKB"/>
</dbReference>
<dbReference type="GO" id="GO:0015031">
    <property type="term" value="P:protein transport"/>
    <property type="evidence" value="ECO:0007669"/>
    <property type="project" value="UniProtKB-KW"/>
</dbReference>
<dbReference type="GO" id="GO:0001881">
    <property type="term" value="P:receptor recycling"/>
    <property type="evidence" value="ECO:0000250"/>
    <property type="project" value="UniProtKB"/>
</dbReference>
<dbReference type="GO" id="GO:0032012">
    <property type="term" value="P:regulation of ARF protein signal transduction"/>
    <property type="evidence" value="ECO:0007669"/>
    <property type="project" value="InterPro"/>
</dbReference>
<dbReference type="CDD" id="cd00171">
    <property type="entry name" value="Sec7"/>
    <property type="match status" value="1"/>
</dbReference>
<dbReference type="FunFam" id="1.25.10.10:FF:000143">
    <property type="entry name" value="ADP-ribosylation factor guanine nucleotide-exchange factor 2 (brefeldin A-inhibited)"/>
    <property type="match status" value="1"/>
</dbReference>
<dbReference type="FunFam" id="1.10.1000.11:FF:000003">
    <property type="entry name" value="Brefeldin A-inhibited guanine nucleotide-exchange protein 1"/>
    <property type="match status" value="1"/>
</dbReference>
<dbReference type="FunFam" id="1.10.220.20:FF:000002">
    <property type="entry name" value="Brefeldin A-inhibited guanine nucleotide-exchange protein 1"/>
    <property type="match status" value="1"/>
</dbReference>
<dbReference type="Gene3D" id="1.10.220.20">
    <property type="match status" value="1"/>
</dbReference>
<dbReference type="Gene3D" id="1.10.1000.11">
    <property type="entry name" value="Arf Nucleotide-binding Site Opener,domain 2"/>
    <property type="match status" value="1"/>
</dbReference>
<dbReference type="InterPro" id="IPR016024">
    <property type="entry name" value="ARM-type_fold"/>
</dbReference>
<dbReference type="InterPro" id="IPR032629">
    <property type="entry name" value="DCB_dom"/>
</dbReference>
<dbReference type="InterPro" id="IPR015403">
    <property type="entry name" value="Mon2/Sec7/BIG1-like_HDS"/>
</dbReference>
<dbReference type="InterPro" id="IPR032691">
    <property type="entry name" value="Mon2/Sec7/BIG1-like_HUS"/>
</dbReference>
<dbReference type="InterPro" id="IPR046455">
    <property type="entry name" value="Sec7/BIG1-like_C"/>
</dbReference>
<dbReference type="InterPro" id="IPR023394">
    <property type="entry name" value="Sec7_C_sf"/>
</dbReference>
<dbReference type="InterPro" id="IPR000904">
    <property type="entry name" value="Sec7_dom"/>
</dbReference>
<dbReference type="InterPro" id="IPR035999">
    <property type="entry name" value="Sec7_dom_sf"/>
</dbReference>
<dbReference type="PANTHER" id="PTHR10663:SF124">
    <property type="entry name" value="BREFELDIN A-INHIBITED GUANINE NUCLEOTIDE-EXCHANGE PROTEIN 2"/>
    <property type="match status" value="1"/>
</dbReference>
<dbReference type="PANTHER" id="PTHR10663">
    <property type="entry name" value="GUANYL-NUCLEOTIDE EXCHANGE FACTOR"/>
    <property type="match status" value="1"/>
</dbReference>
<dbReference type="Pfam" id="PF20252">
    <property type="entry name" value="BIG2_C"/>
    <property type="match status" value="1"/>
</dbReference>
<dbReference type="Pfam" id="PF16213">
    <property type="entry name" value="DCB"/>
    <property type="match status" value="1"/>
</dbReference>
<dbReference type="Pfam" id="PF01369">
    <property type="entry name" value="Sec7"/>
    <property type="match status" value="1"/>
</dbReference>
<dbReference type="Pfam" id="PF09324">
    <property type="entry name" value="Sec7-like_HDS"/>
    <property type="match status" value="1"/>
</dbReference>
<dbReference type="Pfam" id="PF12783">
    <property type="entry name" value="Sec7-like_HUS"/>
    <property type="match status" value="1"/>
</dbReference>
<dbReference type="SMART" id="SM00222">
    <property type="entry name" value="Sec7"/>
    <property type="match status" value="1"/>
</dbReference>
<dbReference type="SUPFAM" id="SSF48371">
    <property type="entry name" value="ARM repeat"/>
    <property type="match status" value="1"/>
</dbReference>
<dbReference type="SUPFAM" id="SSF48425">
    <property type="entry name" value="Sec7 domain"/>
    <property type="match status" value="1"/>
</dbReference>
<dbReference type="PROSITE" id="PS50190">
    <property type="entry name" value="SEC7"/>
    <property type="match status" value="1"/>
</dbReference>
<protein>
    <recommendedName>
        <fullName>Brefeldin A-inhibited guanine nucleotide-exchange protein 2</fullName>
        <shortName>Brefeldin A-inhibited GEP 2</shortName>
    </recommendedName>
    <alternativeName>
        <fullName>ADP-ribosylation factor guanine nucleotide-exchange factor 2</fullName>
    </alternativeName>
</protein>
<organism>
    <name type="scientific">Mus musculus</name>
    <name type="common">Mouse</name>
    <dbReference type="NCBI Taxonomy" id="10090"/>
    <lineage>
        <taxon>Eukaryota</taxon>
        <taxon>Metazoa</taxon>
        <taxon>Chordata</taxon>
        <taxon>Craniata</taxon>
        <taxon>Vertebrata</taxon>
        <taxon>Euteleostomi</taxon>
        <taxon>Mammalia</taxon>
        <taxon>Eutheria</taxon>
        <taxon>Euarchontoglires</taxon>
        <taxon>Glires</taxon>
        <taxon>Rodentia</taxon>
        <taxon>Myomorpha</taxon>
        <taxon>Muroidea</taxon>
        <taxon>Muridae</taxon>
        <taxon>Murinae</taxon>
        <taxon>Mus</taxon>
        <taxon>Mus</taxon>
    </lineage>
</organism>
<name>BIG2_MOUSE</name>
<reference key="1">
    <citation type="journal article" date="2009" name="PLoS Biol.">
        <title>Lineage-specific biology revealed by a finished genome assembly of the mouse.</title>
        <authorList>
            <person name="Church D.M."/>
            <person name="Goodstadt L."/>
            <person name="Hillier L.W."/>
            <person name="Zody M.C."/>
            <person name="Goldstein S."/>
            <person name="She X."/>
            <person name="Bult C.J."/>
            <person name="Agarwala R."/>
            <person name="Cherry J.L."/>
            <person name="DiCuccio M."/>
            <person name="Hlavina W."/>
            <person name="Kapustin Y."/>
            <person name="Meric P."/>
            <person name="Maglott D."/>
            <person name="Birtle Z."/>
            <person name="Marques A.C."/>
            <person name="Graves T."/>
            <person name="Zhou S."/>
            <person name="Teague B."/>
            <person name="Potamousis K."/>
            <person name="Churas C."/>
            <person name="Place M."/>
            <person name="Herschleb J."/>
            <person name="Runnheim R."/>
            <person name="Forrest D."/>
            <person name="Amos-Landgraf J."/>
            <person name="Schwartz D.C."/>
            <person name="Cheng Z."/>
            <person name="Lindblad-Toh K."/>
            <person name="Eichler E.E."/>
            <person name="Ponting C.P."/>
        </authorList>
    </citation>
    <scope>NUCLEOTIDE SEQUENCE [LARGE SCALE GENOMIC DNA]</scope>
    <source>
        <strain>C57BL/6J</strain>
    </source>
</reference>
<reference key="2">
    <citation type="submission" date="2005-07" db="EMBL/GenBank/DDBJ databases">
        <authorList>
            <person name="Mural R.J."/>
            <person name="Adams M.D."/>
            <person name="Myers E.W."/>
            <person name="Smith H.O."/>
            <person name="Venter J.C."/>
        </authorList>
    </citation>
    <scope>NUCLEOTIDE SEQUENCE [LARGE SCALE GENOMIC DNA]</scope>
</reference>
<reference key="3">
    <citation type="journal article" date="2004" name="Genome Res.">
        <title>The status, quality, and expansion of the NIH full-length cDNA project: the Mammalian Gene Collection (MGC).</title>
        <authorList>
            <consortium name="The MGC Project Team"/>
        </authorList>
    </citation>
    <scope>NUCLEOTIDE SEQUENCE [LARGE SCALE MRNA]</scope>
    <source>
        <tissue>Brain</tissue>
    </source>
</reference>
<reference key="4">
    <citation type="journal article" date="2007" name="Proc. Natl. Acad. Sci. U.S.A.">
        <title>Large-scale phosphorylation analysis of mouse liver.</title>
        <authorList>
            <person name="Villen J."/>
            <person name="Beausoleil S.A."/>
            <person name="Gerber S.A."/>
            <person name="Gygi S.P."/>
        </authorList>
    </citation>
    <scope>PHOSPHORYLATION [LARGE SCALE ANALYSIS] AT SER-218; SER-227; SER-621 AND THR-623</scope>
    <scope>IDENTIFICATION BY MASS SPECTROMETRY [LARGE SCALE ANALYSIS]</scope>
    <source>
        <tissue>Liver</tissue>
    </source>
</reference>
<reference key="5">
    <citation type="journal article" date="2008" name="J. Proteome Res.">
        <title>Specific phosphopeptide enrichment with immobilized titanium ion affinity chromatography adsorbent for phosphoproteome analysis.</title>
        <authorList>
            <person name="Zhou H."/>
            <person name="Ye M."/>
            <person name="Dong J."/>
            <person name="Han G."/>
            <person name="Jiang X."/>
            <person name="Wu R."/>
            <person name="Zou H."/>
        </authorList>
    </citation>
    <scope>IDENTIFICATION BY MASS SPECTROMETRY [LARGE SCALE ANALYSIS]</scope>
    <source>
        <tissue>Liver</tissue>
    </source>
</reference>
<reference key="6">
    <citation type="journal article" date="2009" name="Mol. Cell. Proteomics">
        <title>Large scale localization of protein phosphorylation by use of electron capture dissociation mass spectrometry.</title>
        <authorList>
            <person name="Sweet S.M."/>
            <person name="Bailey C.M."/>
            <person name="Cunningham D.L."/>
            <person name="Heath J.K."/>
            <person name="Cooper H.J."/>
        </authorList>
    </citation>
    <scope>IDENTIFICATION BY MASS SPECTROMETRY [LARGE SCALE ANALYSIS]</scope>
    <source>
        <tissue>Embryonic fibroblast</tissue>
    </source>
</reference>
<reference key="7">
    <citation type="journal article" date="2010" name="Cell">
        <title>A tissue-specific atlas of mouse protein phosphorylation and expression.</title>
        <authorList>
            <person name="Huttlin E.L."/>
            <person name="Jedrychowski M.P."/>
            <person name="Elias J.E."/>
            <person name="Goswami T."/>
            <person name="Rad R."/>
            <person name="Beausoleil S.A."/>
            <person name="Villen J."/>
            <person name="Haas W."/>
            <person name="Sowa M.E."/>
            <person name="Gygi S.P."/>
        </authorList>
    </citation>
    <scope>PHOSPHORYLATION [LARGE SCALE ANALYSIS] AT SER-218; SER-227; SER-621; THR-623; SER-624; THR-633 AND SER-1535</scope>
    <scope>IDENTIFICATION BY MASS SPECTROMETRY [LARGE SCALE ANALYSIS]</scope>
    <source>
        <tissue>Brain</tissue>
        <tissue>Brown adipose tissue</tissue>
        <tissue>Heart</tissue>
        <tissue>Kidney</tissue>
        <tissue>Liver</tissue>
        <tissue>Lung</tissue>
        <tissue>Pancreas</tissue>
        <tissue>Spleen</tissue>
        <tissue>Testis</tissue>
    </source>
</reference>
<proteinExistence type="evidence at protein level"/>
<evidence type="ECO:0000250" key="1"/>
<evidence type="ECO:0000250" key="2">
    <source>
        <dbReference type="UniProtKB" id="Q7TSU1"/>
    </source>
</evidence>
<evidence type="ECO:0000250" key="3">
    <source>
        <dbReference type="UniProtKB" id="Q9Y6D5"/>
    </source>
</evidence>
<evidence type="ECO:0000255" key="4">
    <source>
        <dbReference type="PROSITE-ProRule" id="PRU00189"/>
    </source>
</evidence>
<evidence type="ECO:0000256" key="5">
    <source>
        <dbReference type="SAM" id="MobiDB-lite"/>
    </source>
</evidence>
<evidence type="ECO:0007744" key="6">
    <source>
    </source>
</evidence>
<evidence type="ECO:0007744" key="7">
    <source>
    </source>
</evidence>
<accession>A2A5R2</accession>
<keyword id="KW-0007">Acetylation</keyword>
<keyword id="KW-0966">Cell projection</keyword>
<keyword id="KW-0963">Cytoplasm</keyword>
<keyword id="KW-0968">Cytoplasmic vesicle</keyword>
<keyword id="KW-0206">Cytoskeleton</keyword>
<keyword id="KW-0967">Endosome</keyword>
<keyword id="KW-0333">Golgi apparatus</keyword>
<keyword id="KW-0344">Guanine-nucleotide releasing factor</keyword>
<keyword id="KW-0472">Membrane</keyword>
<keyword id="KW-0597">Phosphoprotein</keyword>
<keyword id="KW-0653">Protein transport</keyword>
<keyword id="KW-1185">Reference proteome</keyword>
<keyword id="KW-0770">Synapse</keyword>
<keyword id="KW-0813">Transport</keyword>
<sequence>MQESQTKSMFVSRALEKILADKEVKRPQHSQLRRACQVALDEIKAELEKQRLGAAAPPKANFIEADKYFLPFELACQSKSPRVVSTSLDCLQKLIAYGHITGNAPDSGAPGKRLIDRIVETICNCFQGPQTDEGVQLQIIKALLTAVTSPHIEIHEGTILQTVRTCYNIYLASKNLINQTTAKATLTQMLNVIFTRMENQVLQEARELEKPMQSKPQSPVIQATAGSPKFSRLKQSQAQSKPTTPEKAELPNGDHAQSGLGKVSLENGEAPRERGSPVSGRAEPSRGTDSGAQEVVKDILEDVVTSAVKEAAEKHGLPEPDRALGALECQECAVPPGVDENSQTNGIADDRQSLSSADNLEPDVQGHQVAARFSHILQKDAFLVFRSLCKLSMKPLGEGPPDPKSHELRSKVVSLQLLLSVLQNAGPVFRSHEMFVTAIKQYLCVALSKNGVSSVPDVFELSLAIFLTLLSNFKMHLKMQIEVFFKEIFLNILETSTSSFEHRWMVIQTLTRICADAQCVVDIYVNYDCDLNAANIFERLVNDLSKIAQGRSGHELGMTPLQELSLRKKGLECLVSILKCMVEWSKDLYVNPNHQATLGQERLPDQEMGDGKGLDMARRCSVTSVESTVSSGTQTAIQDDPEQFEVIKQQKEIIEHGIELFNKKPKRGIQFLQEQGMLGAAVEDIAQFLHQEERLDSTQVGEFLGDSTRFNKEVMYAYVDQLDFCEKEFVSALRTFLEGFRLPGEAQKIDRLMEKFAARYIECNQGQTLFASADTAYVLAYSIIMLTTDLHSPQVKNKMTKEQYIKMNRGINDSKDLPEEYLSSIYDEIEGKKIAMKETKEHTIATKSTKQSVASEKQRRLLYNVEMEQMAKTAKALMEAVSHAKAPFTSATHLDHVRPMFKLVWTPLLAAYSIGLQNCDDTEVASLCLEGIRCAVRIACIFGMQLERDAYVQALARFSLLTASSSITEMKQKNIDTIKTLITVAHTDGNYLGNSWHEILKCISQLELAQLIGTGVKTRYLSGSGREREGSLKGHSLAGEEFMGLGLGNLVSGGVDKRQMASFQESVGETSSQSVVVAVDRIFTGSTRLDGNAIVDFVRWLCAVSMDELASPHHPRMFSLQKIVEISYYNMNRIRLQWSRIWHVIGDHFNKVGCNPNEDVAIFAVDSLRQLSMKFLEKGELANFRFQKDFLRPFEHIMKKNRSPTIRDMVIRCIAQMVSSQAANIRSGWKNIFAVFHQAASDHDGNIVELAFQTTGHIVSTIFQHHFPAAIDSFQDAVKCLSEFACNAAFPDTSMEAIRLIRFCGKYVSERPRVLQEYTSDDMNVAPGDRVWVRGWFPILFELSCIINRCKLDVRTRGLTVMFEIMKSYGHTFAKHWWQDLFRIVFRIFDNMKLPEQQSEKSEWMTTTCNHALYAICDVFTQFYEALHEVLLSDVFAQLQWCVKQDNEQLARSGTNCLENLVISNGEKFSPAVWDETCNCMLDIFKTTIPHVLLTWRPAGMEEEVSDRHLDVDLDRQSLSSIDRNASERGQSQLSNPTDDSWKGAPYAHQKLLASLLIKCVVQLELIQTIDNIVFYPATSKKEDAEHMVAAQQDTLDAEIHIETENQGMYKFMSSQHLFKLLDCLQESHSFSKAFNSNYEQRTVLWRAGFKGKSKPNLLKQETSSLACCLRILFRMYVDENRRDSWDEIQQRLLRVCSEALAYFITVNSESHREAWTSLLLLLLTKTLKISDEKFKAHASMYYPYLCEIMQFDLIPELRAVLRKFFLRIGLVYKIWIPEEPSQVPAALSSTW</sequence>
<comment type="function">
    <text evidence="1">Promotes guanine-nucleotide exchange on ARF1 and ARF3 and to a lower extent on ARF5 and ARF6. Promotes the activation of ARF1/ARF5/ARF6 through replacement of GDP with GTP. Involved in the regulation of Golgi vesicular transport. Required for the integrity of the endosomal compartment. Involved in trafficking from the trans-Golgi network (TGN) to endosomes and is required for membrane association of the AP-1 complex and GGA1. Seems to be involved in recycling of the transferrin receptor from recycling endosomes to the plasma membrane. Probably is involved in the exit of GABA(A) receptors from the endoplasmic reticulum. Involved in constitutive release of tumor necrosis factor receptor 1 via exosome-like vesicles; the function seems to involve PKA and specifically PRKAR2B. Proposed to act as A kinase-anchoring protein (AKAP) and may mediate crosstalk between Arf and PKA pathways (By similarity).</text>
</comment>
<comment type="activity regulation">
    <text evidence="1">Inhibited by brefeldin A.</text>
</comment>
<comment type="subunit">
    <text evidence="1">Homodimer. Interacts with ARFGEF1/BIG1; both proteins are probably part of the same or very similar macromolecular complexes. Interacts with PRKAR1A, PRKAR2A, PRKAR1B, PRKAR2B, PPP1CC, PDE3A, TNFRSF1A, MYCBP and EXOC7. Interacts with GABRB1, GABRB2 and GABRB3 (By similarity).</text>
</comment>
<comment type="subcellular location">
    <subcellularLocation>
        <location evidence="1">Cytoplasm</location>
    </subcellularLocation>
    <subcellularLocation>
        <location evidence="1">Membrane</location>
    </subcellularLocation>
    <subcellularLocation>
        <location evidence="1">Golgi apparatus</location>
    </subcellularLocation>
    <subcellularLocation>
        <location evidence="1">Cytoplasm</location>
        <location evidence="1">Perinuclear region</location>
    </subcellularLocation>
    <subcellularLocation>
        <location evidence="1">Golgi apparatus</location>
        <location evidence="1">trans-Golgi network</location>
    </subcellularLocation>
    <subcellularLocation>
        <location evidence="1">Endosome</location>
    </subcellularLocation>
    <subcellularLocation>
        <location evidence="1">Cytoplasm</location>
        <location evidence="1">Cytoskeleton</location>
        <location evidence="1">Microtubule organizing center</location>
        <location evidence="1">Centrosome</location>
    </subcellularLocation>
    <subcellularLocation>
        <location evidence="1">Cell projection</location>
        <location evidence="1">Dendrite</location>
    </subcellularLocation>
    <subcellularLocation>
        <location evidence="1">Cytoplasmic vesicle</location>
    </subcellularLocation>
    <subcellularLocation>
        <location evidence="1">Synapse</location>
    </subcellularLocation>
    <subcellularLocation>
        <location evidence="1">Cytoplasm</location>
        <location evidence="1">Cytoskeleton</location>
    </subcellularLocation>
    <text evidence="1">Translocates from cytoplasm to membranes upon cAMP treatment. Localized in recycling endosomes (By similarity).</text>
</comment>
<comment type="PTM">
    <text evidence="1">In vitro phosphorylated by PKA reducing its GEF activity and dephosphorylated by phosphatase PP1.</text>
</comment>
<gene>
    <name type="primary">Arfgef2</name>
    <name type="synonym">Arfgep2</name>
    <name type="synonym">Big2</name>
</gene>